<evidence type="ECO:0000255" key="1">
    <source>
        <dbReference type="HAMAP-Rule" id="MF_01559"/>
    </source>
</evidence>
<keyword id="KW-0997">Cell inner membrane</keyword>
<keyword id="KW-1003">Cell membrane</keyword>
<keyword id="KW-0285">Flavoprotein</keyword>
<keyword id="KW-0288">FMN</keyword>
<keyword id="KW-0472">Membrane</keyword>
<keyword id="KW-0560">Oxidoreductase</keyword>
<keyword id="KW-1185">Reference proteome</keyword>
<name>LLDD_SHIDS</name>
<gene>
    <name evidence="1" type="primary">lldD</name>
    <name type="ordered locus">SDY_4038</name>
</gene>
<reference key="1">
    <citation type="journal article" date="2005" name="Nucleic Acids Res.">
        <title>Genome dynamics and diversity of Shigella species, the etiologic agents of bacillary dysentery.</title>
        <authorList>
            <person name="Yang F."/>
            <person name="Yang J."/>
            <person name="Zhang X."/>
            <person name="Chen L."/>
            <person name="Jiang Y."/>
            <person name="Yan Y."/>
            <person name="Tang X."/>
            <person name="Wang J."/>
            <person name="Xiong Z."/>
            <person name="Dong J."/>
            <person name="Xue Y."/>
            <person name="Zhu Y."/>
            <person name="Xu X."/>
            <person name="Sun L."/>
            <person name="Chen S."/>
            <person name="Nie H."/>
            <person name="Peng J."/>
            <person name="Xu J."/>
            <person name="Wang Y."/>
            <person name="Yuan Z."/>
            <person name="Wen Y."/>
            <person name="Yao Z."/>
            <person name="Shen Y."/>
            <person name="Qiang B."/>
            <person name="Hou Y."/>
            <person name="Yu J."/>
            <person name="Jin Q."/>
        </authorList>
    </citation>
    <scope>NUCLEOTIDE SEQUENCE [LARGE SCALE GENOMIC DNA]</scope>
    <source>
        <strain>Sd197</strain>
    </source>
</reference>
<dbReference type="EC" id="1.1.-.-" evidence="1"/>
<dbReference type="EMBL" id="CP000034">
    <property type="protein sequence ID" value="ABB63956.1"/>
    <property type="molecule type" value="Genomic_DNA"/>
</dbReference>
<dbReference type="RefSeq" id="WP_000586955.1">
    <property type="nucleotide sequence ID" value="NC_007606.1"/>
</dbReference>
<dbReference type="RefSeq" id="YP_405447.1">
    <property type="nucleotide sequence ID" value="NC_007606.1"/>
</dbReference>
<dbReference type="SMR" id="Q329P9"/>
<dbReference type="STRING" id="300267.SDY_4038"/>
<dbReference type="EnsemblBacteria" id="ABB63956">
    <property type="protein sequence ID" value="ABB63956"/>
    <property type="gene ID" value="SDY_4038"/>
</dbReference>
<dbReference type="KEGG" id="sdy:SDY_4038"/>
<dbReference type="PATRIC" id="fig|300267.13.peg.4753"/>
<dbReference type="HOGENOM" id="CLU_020639_0_0_6"/>
<dbReference type="Proteomes" id="UP000002716">
    <property type="component" value="Chromosome"/>
</dbReference>
<dbReference type="GO" id="GO:0005886">
    <property type="term" value="C:plasma membrane"/>
    <property type="evidence" value="ECO:0007669"/>
    <property type="project" value="UniProtKB-SubCell"/>
</dbReference>
<dbReference type="GO" id="GO:0010181">
    <property type="term" value="F:FMN binding"/>
    <property type="evidence" value="ECO:0007669"/>
    <property type="project" value="InterPro"/>
</dbReference>
<dbReference type="GO" id="GO:0004459">
    <property type="term" value="F:L-lactate dehydrogenase activity"/>
    <property type="evidence" value="ECO:0007669"/>
    <property type="project" value="UniProtKB-UniRule"/>
</dbReference>
<dbReference type="GO" id="GO:0009060">
    <property type="term" value="P:aerobic respiration"/>
    <property type="evidence" value="ECO:0007669"/>
    <property type="project" value="TreeGrafter"/>
</dbReference>
<dbReference type="GO" id="GO:0006089">
    <property type="term" value="P:lactate metabolic process"/>
    <property type="evidence" value="ECO:0007669"/>
    <property type="project" value="UniProtKB-UniRule"/>
</dbReference>
<dbReference type="CDD" id="cd02809">
    <property type="entry name" value="alpha_hydroxyacid_oxid_FMN"/>
    <property type="match status" value="1"/>
</dbReference>
<dbReference type="FunFam" id="3.20.20.70:FF:000029">
    <property type="entry name" value="L-lactate dehydrogenase"/>
    <property type="match status" value="1"/>
</dbReference>
<dbReference type="Gene3D" id="3.20.20.70">
    <property type="entry name" value="Aldolase class I"/>
    <property type="match status" value="1"/>
</dbReference>
<dbReference type="HAMAP" id="MF_01559">
    <property type="entry name" value="L_lact_dehydr"/>
    <property type="match status" value="1"/>
</dbReference>
<dbReference type="InterPro" id="IPR013785">
    <property type="entry name" value="Aldolase_TIM"/>
</dbReference>
<dbReference type="InterPro" id="IPR012133">
    <property type="entry name" value="Alpha-hydoxy_acid_DH_FMN"/>
</dbReference>
<dbReference type="InterPro" id="IPR000262">
    <property type="entry name" value="FMN-dep_DH"/>
</dbReference>
<dbReference type="InterPro" id="IPR037396">
    <property type="entry name" value="FMN_HAD"/>
</dbReference>
<dbReference type="InterPro" id="IPR008259">
    <property type="entry name" value="FMN_hydac_DH_AS"/>
</dbReference>
<dbReference type="InterPro" id="IPR020920">
    <property type="entry name" value="LldD"/>
</dbReference>
<dbReference type="NCBIfam" id="NF033901">
    <property type="entry name" value="L_lactate_LldD"/>
    <property type="match status" value="1"/>
</dbReference>
<dbReference type="NCBIfam" id="NF008398">
    <property type="entry name" value="PRK11197.1"/>
    <property type="match status" value="1"/>
</dbReference>
<dbReference type="PANTHER" id="PTHR10578:SF85">
    <property type="entry name" value="L-LACTATE DEHYDROGENASE"/>
    <property type="match status" value="1"/>
</dbReference>
<dbReference type="PANTHER" id="PTHR10578">
    <property type="entry name" value="S -2-HYDROXY-ACID OXIDASE-RELATED"/>
    <property type="match status" value="1"/>
</dbReference>
<dbReference type="Pfam" id="PF01070">
    <property type="entry name" value="FMN_dh"/>
    <property type="match status" value="1"/>
</dbReference>
<dbReference type="PIRSF" id="PIRSF000138">
    <property type="entry name" value="Al-hdrx_acd_dh"/>
    <property type="match status" value="1"/>
</dbReference>
<dbReference type="SUPFAM" id="SSF51395">
    <property type="entry name" value="FMN-linked oxidoreductases"/>
    <property type="match status" value="1"/>
</dbReference>
<dbReference type="PROSITE" id="PS00557">
    <property type="entry name" value="FMN_HYDROXY_ACID_DH_1"/>
    <property type="match status" value="1"/>
</dbReference>
<dbReference type="PROSITE" id="PS51349">
    <property type="entry name" value="FMN_HYDROXY_ACID_DH_2"/>
    <property type="match status" value="1"/>
</dbReference>
<accession>Q329P9</accession>
<sequence>MIISAASDYRAAAQRILPPFLFHYMDGGAYSEYTLRRNVEDLSEVALRQRILKNMSDLSLETTLFNEKLSMPVALAPVGLCGMYARRGEVQAAKAADAHGIPFTLSTVSVCPIEEVAPAIKRPMWFQLYVLRDRGFMRNALERAKAAGCSTLVFTVDMPTPGARYRDAHSGMSGPNAAMRRYLQAVTHPQWAWDVGLNGRPHDLGNISAYLGKPTGLEDYIGWLGNNFDPSISWKDLEWIRDFWDGPMVIKGILDPEDARDAVRFGADGIVVSNHGGRQLDGVLSSARALPAIADAVKGDIAILADSGIRNGLDVVRMIALGADTVLLGRAFLYALATAGQAGVANLLNLIEKEMKVAMTLTGAKSINEITQDSLVQGLGKELPAALAPMAKGNAA</sequence>
<comment type="function">
    <text evidence="1">Catalyzes the conversion of L-lactate to pyruvate. Is coupled to the respiratory chain.</text>
</comment>
<comment type="catalytic activity">
    <reaction evidence="1">
        <text>(S)-lactate + A = pyruvate + AH2</text>
        <dbReference type="Rhea" id="RHEA:45816"/>
        <dbReference type="ChEBI" id="CHEBI:13193"/>
        <dbReference type="ChEBI" id="CHEBI:15361"/>
        <dbReference type="ChEBI" id="CHEBI:16651"/>
        <dbReference type="ChEBI" id="CHEBI:17499"/>
    </reaction>
</comment>
<comment type="cofactor">
    <cofactor evidence="1">
        <name>FMN</name>
        <dbReference type="ChEBI" id="CHEBI:58210"/>
    </cofactor>
</comment>
<comment type="subcellular location">
    <subcellularLocation>
        <location evidence="1">Cell inner membrane</location>
        <topology evidence="1">Peripheral membrane protein</topology>
    </subcellularLocation>
</comment>
<comment type="similarity">
    <text evidence="1">Belongs to the FMN-dependent alpha-hydroxy acid dehydrogenase family.</text>
</comment>
<protein>
    <recommendedName>
        <fullName evidence="1">L-lactate dehydrogenase</fullName>
        <ecNumber evidence="1">1.1.-.-</ecNumber>
    </recommendedName>
</protein>
<proteinExistence type="inferred from homology"/>
<organism>
    <name type="scientific">Shigella dysenteriae serotype 1 (strain Sd197)</name>
    <dbReference type="NCBI Taxonomy" id="300267"/>
    <lineage>
        <taxon>Bacteria</taxon>
        <taxon>Pseudomonadati</taxon>
        <taxon>Pseudomonadota</taxon>
        <taxon>Gammaproteobacteria</taxon>
        <taxon>Enterobacterales</taxon>
        <taxon>Enterobacteriaceae</taxon>
        <taxon>Shigella</taxon>
    </lineage>
</organism>
<feature type="chain" id="PRO_0000206349" description="L-lactate dehydrogenase">
    <location>
        <begin position="1"/>
        <end position="396"/>
    </location>
</feature>
<feature type="domain" description="FMN hydroxy acid dehydrogenase" evidence="1">
    <location>
        <begin position="1"/>
        <end position="380"/>
    </location>
</feature>
<feature type="active site" description="Proton acceptor" evidence="1">
    <location>
        <position position="275"/>
    </location>
</feature>
<feature type="binding site" evidence="1">
    <location>
        <position position="24"/>
    </location>
    <ligand>
        <name>substrate</name>
    </ligand>
</feature>
<feature type="binding site" evidence="1">
    <location>
        <position position="106"/>
    </location>
    <ligand>
        <name>FMN</name>
        <dbReference type="ChEBI" id="CHEBI:58210"/>
    </ligand>
</feature>
<feature type="binding site" evidence="1">
    <location>
        <position position="127"/>
    </location>
    <ligand>
        <name>FMN</name>
        <dbReference type="ChEBI" id="CHEBI:58210"/>
    </ligand>
</feature>
<feature type="binding site" evidence="1">
    <location>
        <position position="129"/>
    </location>
    <ligand>
        <name>substrate</name>
    </ligand>
</feature>
<feature type="binding site" evidence="1">
    <location>
        <position position="155"/>
    </location>
    <ligand>
        <name>FMN</name>
        <dbReference type="ChEBI" id="CHEBI:58210"/>
    </ligand>
</feature>
<feature type="binding site" evidence="1">
    <location>
        <position position="164"/>
    </location>
    <ligand>
        <name>substrate</name>
    </ligand>
</feature>
<feature type="binding site" evidence="1">
    <location>
        <position position="251"/>
    </location>
    <ligand>
        <name>FMN</name>
        <dbReference type="ChEBI" id="CHEBI:58210"/>
    </ligand>
</feature>
<feature type="binding site" evidence="1">
    <location>
        <position position="278"/>
    </location>
    <ligand>
        <name>substrate</name>
    </ligand>
</feature>
<feature type="binding site" evidence="1">
    <location>
        <begin position="306"/>
        <end position="330"/>
    </location>
    <ligand>
        <name>FMN</name>
        <dbReference type="ChEBI" id="CHEBI:58210"/>
    </ligand>
</feature>